<evidence type="ECO:0000250" key="1"/>
<evidence type="ECO:0000305" key="2"/>
<dbReference type="EC" id="4.6.1.24"/>
<dbReference type="PIR" id="A23620">
    <property type="entry name" value="A23620"/>
</dbReference>
<dbReference type="SMR" id="P09647"/>
<dbReference type="GO" id="GO:0016829">
    <property type="term" value="F:lyase activity"/>
    <property type="evidence" value="ECO:0007669"/>
    <property type="project" value="UniProtKB-KW"/>
</dbReference>
<dbReference type="GO" id="GO:0046589">
    <property type="term" value="F:ribonuclease T1 activity"/>
    <property type="evidence" value="ECO:0007669"/>
    <property type="project" value="UniProtKB-EC"/>
</dbReference>
<dbReference type="GO" id="GO:0003723">
    <property type="term" value="F:RNA binding"/>
    <property type="evidence" value="ECO:0007669"/>
    <property type="project" value="InterPro"/>
</dbReference>
<dbReference type="GO" id="GO:0004521">
    <property type="term" value="F:RNA endonuclease activity"/>
    <property type="evidence" value="ECO:0007669"/>
    <property type="project" value="InterPro"/>
</dbReference>
<dbReference type="CDD" id="cd00606">
    <property type="entry name" value="fungal_RNase"/>
    <property type="match status" value="1"/>
</dbReference>
<dbReference type="Gene3D" id="3.10.450.30">
    <property type="entry name" value="Microbial ribonucleases"/>
    <property type="match status" value="1"/>
</dbReference>
<dbReference type="InterPro" id="IPR000026">
    <property type="entry name" value="N1-like"/>
</dbReference>
<dbReference type="InterPro" id="IPR016191">
    <property type="entry name" value="Ribonuclease/ribotoxin"/>
</dbReference>
<dbReference type="InterPro" id="IPR051386">
    <property type="entry name" value="Ribonuclease_N1/T1"/>
</dbReference>
<dbReference type="PANTHER" id="PTHR42104">
    <property type="entry name" value="EXTRACELLULAR GUANYL-SPECIFIC RIBONUCLEASE RNTA (AFU_ORTHOLOGUE AFUA_4G03230)"/>
    <property type="match status" value="1"/>
</dbReference>
<dbReference type="PANTHER" id="PTHR42104:SF1">
    <property type="entry name" value="EXTRACELLULAR GUANYL-SPECIFIC RIBONUCLEASE RNTA (AFU_ORTHOLOGUE AFUA_4G03230)"/>
    <property type="match status" value="1"/>
</dbReference>
<dbReference type="Pfam" id="PF00545">
    <property type="entry name" value="Ribonuclease"/>
    <property type="match status" value="1"/>
</dbReference>
<dbReference type="SUPFAM" id="SSF53933">
    <property type="entry name" value="Microbial ribonucleases"/>
    <property type="match status" value="1"/>
</dbReference>
<keyword id="KW-0903">Direct protein sequencing</keyword>
<keyword id="KW-1015">Disulfide bond</keyword>
<keyword id="KW-0255">Endonuclease</keyword>
<keyword id="KW-0378">Hydrolase</keyword>
<keyword id="KW-0456">Lyase</keyword>
<keyword id="KW-0540">Nuclease</keyword>
<name>RNPC_PENCH</name>
<feature type="chain" id="PRO_0000137373" description="Guanyl-specific ribonuclease Pc">
    <location>
        <begin position="1"/>
        <end position="102"/>
    </location>
</feature>
<feature type="active site" evidence="1">
    <location>
        <position position="38"/>
    </location>
</feature>
<feature type="active site" description="Proton acceptor" evidence="1">
    <location>
        <position position="56"/>
    </location>
</feature>
<feature type="active site" description="Proton donor" evidence="1">
    <location>
        <position position="90"/>
    </location>
</feature>
<feature type="disulfide bond" evidence="1">
    <location>
        <begin position="2"/>
        <end position="10"/>
    </location>
</feature>
<feature type="disulfide bond" evidence="1">
    <location>
        <begin position="6"/>
        <end position="101"/>
    </location>
</feature>
<protein>
    <recommendedName>
        <fullName>Guanyl-specific ribonuclease Pc</fullName>
        <shortName>RNase Pc</shortName>
        <ecNumber>4.6.1.24</ecNumber>
    </recommendedName>
</protein>
<accession>P09647</accession>
<organism>
    <name type="scientific">Penicillium chrysogenum</name>
    <name type="common">Penicillium notatum</name>
    <dbReference type="NCBI Taxonomy" id="5076"/>
    <lineage>
        <taxon>Eukaryota</taxon>
        <taxon>Fungi</taxon>
        <taxon>Dikarya</taxon>
        <taxon>Ascomycota</taxon>
        <taxon>Pezizomycotina</taxon>
        <taxon>Eurotiomycetes</taxon>
        <taxon>Eurotiomycetidae</taxon>
        <taxon>Eurotiales</taxon>
        <taxon>Aspergillaceae</taxon>
        <taxon>Penicillium</taxon>
        <taxon>Penicillium chrysogenum species complex</taxon>
    </lineage>
</organism>
<reference key="1">
    <citation type="journal article" date="1986" name="FEBS Lett.">
        <title>Express analysis of protein amino acid sequences. Primary structure of Penicillium chrysogenum 152A guanyl-specific ribonuclease.</title>
        <authorList>
            <person name="Shlyapnikov S.V."/>
            <person name="Bezborodova S.I."/>
            <person name="Kulikov V.A."/>
            <person name="Yakovlev G.I."/>
        </authorList>
    </citation>
    <scope>PROTEIN SEQUENCE</scope>
    <source>
        <strain>152A</strain>
    </source>
</reference>
<comment type="catalytic activity">
    <reaction>
        <text>[RNA] containing guanosine + H2O = an [RNA fragment]-3'-guanosine-3'-phosphate + a 5'-hydroxy-ribonucleotide-3'-[RNA fragment].</text>
        <dbReference type="EC" id="4.6.1.24"/>
    </reaction>
</comment>
<comment type="similarity">
    <text evidence="2">Belongs to the ribonuclease N1/T1 family.</text>
</comment>
<sequence>ACAATCGSVCYTSSAISAAQEAGYDLYSANDDVSNYPHEYRNYEGFDFPVSGTYYEFPILRSGAVYSGNSPGADRVVFNGNDQLAGVITHTGASGNNFVACD</sequence>
<proteinExistence type="evidence at protein level"/>